<evidence type="ECO:0000255" key="1">
    <source>
        <dbReference type="HAMAP-Rule" id="MF_00178"/>
    </source>
</evidence>
<sequence length="156" mass="16157">MNIIEANVATPDARVAITIARFNNFINDSLLEGAIDALKRIGQVKDENITVVWVPGAYELPLAAGALAKTGKYDAVIALGTVIRGGTAHFEYVAGGASNGLAHVAQDSEIPVAFGVLTTESIEQAIERAGTKAGNKGAEAALTALEMINVLKAIKA</sequence>
<proteinExistence type="inferred from homology"/>
<organism>
    <name type="scientific">Escherichia fergusonii (strain ATCC 35469 / DSM 13698 / CCUG 18766 / IAM 14443 / JCM 21226 / LMG 7866 / NBRC 102419 / NCTC 12128 / CDC 0568-73)</name>
    <dbReference type="NCBI Taxonomy" id="585054"/>
    <lineage>
        <taxon>Bacteria</taxon>
        <taxon>Pseudomonadati</taxon>
        <taxon>Pseudomonadota</taxon>
        <taxon>Gammaproteobacteria</taxon>
        <taxon>Enterobacterales</taxon>
        <taxon>Enterobacteriaceae</taxon>
        <taxon>Escherichia</taxon>
    </lineage>
</organism>
<comment type="function">
    <text evidence="1">Catalyzes the formation of 6,7-dimethyl-8-ribityllumazine by condensation of 5-amino-6-(D-ribitylamino)uracil with 3,4-dihydroxy-2-butanone 4-phosphate. This is the penultimate step in the biosynthesis of riboflavin.</text>
</comment>
<comment type="catalytic activity">
    <reaction evidence="1">
        <text>(2S)-2-hydroxy-3-oxobutyl phosphate + 5-amino-6-(D-ribitylamino)uracil = 6,7-dimethyl-8-(1-D-ribityl)lumazine + phosphate + 2 H2O + H(+)</text>
        <dbReference type="Rhea" id="RHEA:26152"/>
        <dbReference type="ChEBI" id="CHEBI:15377"/>
        <dbReference type="ChEBI" id="CHEBI:15378"/>
        <dbReference type="ChEBI" id="CHEBI:15934"/>
        <dbReference type="ChEBI" id="CHEBI:43474"/>
        <dbReference type="ChEBI" id="CHEBI:58201"/>
        <dbReference type="ChEBI" id="CHEBI:58830"/>
        <dbReference type="EC" id="2.5.1.78"/>
    </reaction>
</comment>
<comment type="pathway">
    <text evidence="1">Cofactor biosynthesis; riboflavin biosynthesis; riboflavin from 2-hydroxy-3-oxobutyl phosphate and 5-amino-6-(D-ribitylamino)uracil: step 1/2.</text>
</comment>
<comment type="subunit">
    <text evidence="1">Forms an icosahedral capsid composed of 60 subunits, arranged as a dodecamer of pentamers.</text>
</comment>
<comment type="similarity">
    <text evidence="1">Belongs to the DMRL synthase family.</text>
</comment>
<name>RISB_ESCF3</name>
<protein>
    <recommendedName>
        <fullName evidence="1">6,7-dimethyl-8-ribityllumazine synthase</fullName>
        <shortName evidence="1">DMRL synthase</shortName>
        <shortName evidence="1">LS</shortName>
        <shortName evidence="1">Lumazine synthase</shortName>
        <ecNumber evidence="1">2.5.1.78</ecNumber>
    </recommendedName>
</protein>
<keyword id="KW-0686">Riboflavin biosynthesis</keyword>
<keyword id="KW-0808">Transferase</keyword>
<reference key="1">
    <citation type="journal article" date="2009" name="PLoS Genet.">
        <title>Organised genome dynamics in the Escherichia coli species results in highly diverse adaptive paths.</title>
        <authorList>
            <person name="Touchon M."/>
            <person name="Hoede C."/>
            <person name="Tenaillon O."/>
            <person name="Barbe V."/>
            <person name="Baeriswyl S."/>
            <person name="Bidet P."/>
            <person name="Bingen E."/>
            <person name="Bonacorsi S."/>
            <person name="Bouchier C."/>
            <person name="Bouvet O."/>
            <person name="Calteau A."/>
            <person name="Chiapello H."/>
            <person name="Clermont O."/>
            <person name="Cruveiller S."/>
            <person name="Danchin A."/>
            <person name="Diard M."/>
            <person name="Dossat C."/>
            <person name="Karoui M.E."/>
            <person name="Frapy E."/>
            <person name="Garry L."/>
            <person name="Ghigo J.M."/>
            <person name="Gilles A.M."/>
            <person name="Johnson J."/>
            <person name="Le Bouguenec C."/>
            <person name="Lescat M."/>
            <person name="Mangenot S."/>
            <person name="Martinez-Jehanne V."/>
            <person name="Matic I."/>
            <person name="Nassif X."/>
            <person name="Oztas S."/>
            <person name="Petit M.A."/>
            <person name="Pichon C."/>
            <person name="Rouy Z."/>
            <person name="Ruf C.S."/>
            <person name="Schneider D."/>
            <person name="Tourret J."/>
            <person name="Vacherie B."/>
            <person name="Vallenet D."/>
            <person name="Medigue C."/>
            <person name="Rocha E.P.C."/>
            <person name="Denamur E."/>
        </authorList>
    </citation>
    <scope>NUCLEOTIDE SEQUENCE [LARGE SCALE GENOMIC DNA]</scope>
    <source>
        <strain>ATCC 35469 / DSM 13698 / BCRC 15582 / CCUG 18766 / IAM 14443 / JCM 21226 / LMG 7866 / NBRC 102419 / NCTC 12128 / CDC 0568-73</strain>
    </source>
</reference>
<feature type="chain" id="PRO_1000195490" description="6,7-dimethyl-8-ribityllumazine synthase">
    <location>
        <begin position="1"/>
        <end position="156"/>
    </location>
</feature>
<feature type="active site" description="Proton donor" evidence="1">
    <location>
        <position position="89"/>
    </location>
</feature>
<feature type="binding site" evidence="1">
    <location>
        <position position="22"/>
    </location>
    <ligand>
        <name>5-amino-6-(D-ribitylamino)uracil</name>
        <dbReference type="ChEBI" id="CHEBI:15934"/>
    </ligand>
</feature>
<feature type="binding site" evidence="1">
    <location>
        <begin position="57"/>
        <end position="59"/>
    </location>
    <ligand>
        <name>5-amino-6-(D-ribitylamino)uracil</name>
        <dbReference type="ChEBI" id="CHEBI:15934"/>
    </ligand>
</feature>
<feature type="binding site" evidence="1">
    <location>
        <begin position="81"/>
        <end position="83"/>
    </location>
    <ligand>
        <name>5-amino-6-(D-ribitylamino)uracil</name>
        <dbReference type="ChEBI" id="CHEBI:15934"/>
    </ligand>
</feature>
<feature type="binding site" evidence="1">
    <location>
        <begin position="86"/>
        <end position="87"/>
    </location>
    <ligand>
        <name>(2S)-2-hydroxy-3-oxobutyl phosphate</name>
        <dbReference type="ChEBI" id="CHEBI:58830"/>
    </ligand>
</feature>
<feature type="binding site" evidence="1">
    <location>
        <position position="114"/>
    </location>
    <ligand>
        <name>5-amino-6-(D-ribitylamino)uracil</name>
        <dbReference type="ChEBI" id="CHEBI:15934"/>
    </ligand>
</feature>
<feature type="binding site" evidence="1">
    <location>
        <position position="128"/>
    </location>
    <ligand>
        <name>(2S)-2-hydroxy-3-oxobutyl phosphate</name>
        <dbReference type="ChEBI" id="CHEBI:58830"/>
    </ligand>
</feature>
<dbReference type="EC" id="2.5.1.78" evidence="1"/>
<dbReference type="EMBL" id="CU928158">
    <property type="protein sequence ID" value="CAQ90105.1"/>
    <property type="molecule type" value="Genomic_DNA"/>
</dbReference>
<dbReference type="SMR" id="B7LMH2"/>
<dbReference type="KEGG" id="efe:EFER_2610"/>
<dbReference type="HOGENOM" id="CLU_089358_1_1_6"/>
<dbReference type="OrthoDB" id="9809709at2"/>
<dbReference type="UniPathway" id="UPA00275">
    <property type="reaction ID" value="UER00404"/>
</dbReference>
<dbReference type="Proteomes" id="UP000000745">
    <property type="component" value="Chromosome"/>
</dbReference>
<dbReference type="GO" id="GO:0005829">
    <property type="term" value="C:cytosol"/>
    <property type="evidence" value="ECO:0007669"/>
    <property type="project" value="TreeGrafter"/>
</dbReference>
<dbReference type="GO" id="GO:0009349">
    <property type="term" value="C:riboflavin synthase complex"/>
    <property type="evidence" value="ECO:0007669"/>
    <property type="project" value="InterPro"/>
</dbReference>
<dbReference type="GO" id="GO:0000906">
    <property type="term" value="F:6,7-dimethyl-8-ribityllumazine synthase activity"/>
    <property type="evidence" value="ECO:0007669"/>
    <property type="project" value="UniProtKB-UniRule"/>
</dbReference>
<dbReference type="GO" id="GO:0009231">
    <property type="term" value="P:riboflavin biosynthetic process"/>
    <property type="evidence" value="ECO:0007669"/>
    <property type="project" value="UniProtKB-UniRule"/>
</dbReference>
<dbReference type="CDD" id="cd09209">
    <property type="entry name" value="Lumazine_synthase-I"/>
    <property type="match status" value="1"/>
</dbReference>
<dbReference type="FunFam" id="3.40.50.960:FF:000001">
    <property type="entry name" value="6,7-dimethyl-8-ribityllumazine synthase"/>
    <property type="match status" value="1"/>
</dbReference>
<dbReference type="Gene3D" id="3.40.50.960">
    <property type="entry name" value="Lumazine/riboflavin synthase"/>
    <property type="match status" value="1"/>
</dbReference>
<dbReference type="HAMAP" id="MF_00178">
    <property type="entry name" value="Lumazine_synth"/>
    <property type="match status" value="1"/>
</dbReference>
<dbReference type="InterPro" id="IPR034964">
    <property type="entry name" value="LS"/>
</dbReference>
<dbReference type="InterPro" id="IPR002180">
    <property type="entry name" value="LS/RS"/>
</dbReference>
<dbReference type="InterPro" id="IPR036467">
    <property type="entry name" value="LS/RS_sf"/>
</dbReference>
<dbReference type="NCBIfam" id="TIGR00114">
    <property type="entry name" value="lumazine-synth"/>
    <property type="match status" value="1"/>
</dbReference>
<dbReference type="NCBIfam" id="NF000812">
    <property type="entry name" value="PRK00061.1-4"/>
    <property type="match status" value="1"/>
</dbReference>
<dbReference type="PANTHER" id="PTHR21058:SF0">
    <property type="entry name" value="6,7-DIMETHYL-8-RIBITYLLUMAZINE SYNTHASE"/>
    <property type="match status" value="1"/>
</dbReference>
<dbReference type="PANTHER" id="PTHR21058">
    <property type="entry name" value="6,7-DIMETHYL-8-RIBITYLLUMAZINE SYNTHASE DMRL SYNTHASE LUMAZINE SYNTHASE"/>
    <property type="match status" value="1"/>
</dbReference>
<dbReference type="Pfam" id="PF00885">
    <property type="entry name" value="DMRL_synthase"/>
    <property type="match status" value="1"/>
</dbReference>
<dbReference type="SUPFAM" id="SSF52121">
    <property type="entry name" value="Lumazine synthase"/>
    <property type="match status" value="1"/>
</dbReference>
<accession>B7LMH2</accession>
<gene>
    <name evidence="1" type="primary">ribH</name>
    <name type="ordered locus">EFER_2610</name>
</gene>